<comment type="catalytic activity">
    <reaction evidence="1">
        <text>L-cysteine + L-glutamate + ATP = gamma-L-glutamyl-L-cysteine + ADP + phosphate + H(+)</text>
        <dbReference type="Rhea" id="RHEA:13285"/>
        <dbReference type="ChEBI" id="CHEBI:15378"/>
        <dbReference type="ChEBI" id="CHEBI:29985"/>
        <dbReference type="ChEBI" id="CHEBI:30616"/>
        <dbReference type="ChEBI" id="CHEBI:35235"/>
        <dbReference type="ChEBI" id="CHEBI:43474"/>
        <dbReference type="ChEBI" id="CHEBI:58173"/>
        <dbReference type="ChEBI" id="CHEBI:456216"/>
        <dbReference type="EC" id="6.3.2.2"/>
    </reaction>
</comment>
<comment type="pathway">
    <text evidence="1">Sulfur metabolism; glutathione biosynthesis; glutathione from L-cysteine and L-glutamate: step 1/2.</text>
</comment>
<comment type="similarity">
    <text evidence="1">Belongs to the glutamate--cysteine ligase type 1 family. Type 1 subfamily.</text>
</comment>
<feature type="chain" id="PRO_1000025188" description="Glutamate--cysteine ligase">
    <location>
        <begin position="1"/>
        <end position="518"/>
    </location>
</feature>
<reference key="1">
    <citation type="journal article" date="2005" name="Nucleic Acids Res.">
        <title>Genome dynamics and diversity of Shigella species, the etiologic agents of bacillary dysentery.</title>
        <authorList>
            <person name="Yang F."/>
            <person name="Yang J."/>
            <person name="Zhang X."/>
            <person name="Chen L."/>
            <person name="Jiang Y."/>
            <person name="Yan Y."/>
            <person name="Tang X."/>
            <person name="Wang J."/>
            <person name="Xiong Z."/>
            <person name="Dong J."/>
            <person name="Xue Y."/>
            <person name="Zhu Y."/>
            <person name="Xu X."/>
            <person name="Sun L."/>
            <person name="Chen S."/>
            <person name="Nie H."/>
            <person name="Peng J."/>
            <person name="Xu J."/>
            <person name="Wang Y."/>
            <person name="Yuan Z."/>
            <person name="Wen Y."/>
            <person name="Yao Z."/>
            <person name="Shen Y."/>
            <person name="Qiang B."/>
            <person name="Hou Y."/>
            <person name="Yu J."/>
            <person name="Jin Q."/>
        </authorList>
    </citation>
    <scope>NUCLEOTIDE SEQUENCE [LARGE SCALE GENOMIC DNA]</scope>
    <source>
        <strain>Sd197</strain>
    </source>
</reference>
<gene>
    <name evidence="1" type="primary">gshA</name>
    <name type="ordered locus">SDY_2885</name>
</gene>
<organism>
    <name type="scientific">Shigella dysenteriae serotype 1 (strain Sd197)</name>
    <dbReference type="NCBI Taxonomy" id="300267"/>
    <lineage>
        <taxon>Bacteria</taxon>
        <taxon>Pseudomonadati</taxon>
        <taxon>Pseudomonadota</taxon>
        <taxon>Gammaproteobacteria</taxon>
        <taxon>Enterobacterales</taxon>
        <taxon>Enterobacteriaceae</taxon>
        <taxon>Shigella</taxon>
    </lineage>
</organism>
<accession>Q32CN5</accession>
<name>GSH1_SHIDS</name>
<protein>
    <recommendedName>
        <fullName evidence="1">Glutamate--cysteine ligase</fullName>
        <ecNumber evidence="1">6.3.2.2</ecNumber>
    </recommendedName>
    <alternativeName>
        <fullName evidence="1">Gamma-ECS</fullName>
        <shortName evidence="1">GCS</shortName>
    </alternativeName>
    <alternativeName>
        <fullName evidence="1">Gamma-glutamylcysteine synthetase</fullName>
    </alternativeName>
</protein>
<dbReference type="EC" id="6.3.2.2" evidence="1"/>
<dbReference type="EMBL" id="CP000034">
    <property type="protein sequence ID" value="ABB62920.1"/>
    <property type="molecule type" value="Genomic_DNA"/>
</dbReference>
<dbReference type="RefSeq" id="WP_000611804.1">
    <property type="nucleotide sequence ID" value="NC_007606.1"/>
</dbReference>
<dbReference type="RefSeq" id="YP_404411.1">
    <property type="nucleotide sequence ID" value="NC_007606.1"/>
</dbReference>
<dbReference type="SMR" id="Q32CN5"/>
<dbReference type="STRING" id="300267.SDY_2885"/>
<dbReference type="EnsemblBacteria" id="ABB62920">
    <property type="protein sequence ID" value="ABB62920"/>
    <property type="gene ID" value="SDY_2885"/>
</dbReference>
<dbReference type="KEGG" id="sdy:SDY_2885"/>
<dbReference type="PATRIC" id="fig|300267.13.peg.3469"/>
<dbReference type="HOGENOM" id="CLU_020728_3_0_6"/>
<dbReference type="UniPathway" id="UPA00142">
    <property type="reaction ID" value="UER00209"/>
</dbReference>
<dbReference type="Proteomes" id="UP000002716">
    <property type="component" value="Chromosome"/>
</dbReference>
<dbReference type="GO" id="GO:0005829">
    <property type="term" value="C:cytosol"/>
    <property type="evidence" value="ECO:0007669"/>
    <property type="project" value="TreeGrafter"/>
</dbReference>
<dbReference type="GO" id="GO:0005524">
    <property type="term" value="F:ATP binding"/>
    <property type="evidence" value="ECO:0007669"/>
    <property type="project" value="UniProtKB-KW"/>
</dbReference>
<dbReference type="GO" id="GO:0004357">
    <property type="term" value="F:glutamate-cysteine ligase activity"/>
    <property type="evidence" value="ECO:0007669"/>
    <property type="project" value="UniProtKB-UniRule"/>
</dbReference>
<dbReference type="GO" id="GO:0046872">
    <property type="term" value="F:metal ion binding"/>
    <property type="evidence" value="ECO:0007669"/>
    <property type="project" value="TreeGrafter"/>
</dbReference>
<dbReference type="GO" id="GO:0006750">
    <property type="term" value="P:glutathione biosynthetic process"/>
    <property type="evidence" value="ECO:0007669"/>
    <property type="project" value="UniProtKB-UniRule"/>
</dbReference>
<dbReference type="FunFam" id="3.30.590.20:FF:000001">
    <property type="entry name" value="Glutamate--cysteine ligase"/>
    <property type="match status" value="1"/>
</dbReference>
<dbReference type="Gene3D" id="3.30.590.20">
    <property type="match status" value="1"/>
</dbReference>
<dbReference type="HAMAP" id="MF_00578">
    <property type="entry name" value="Glu_cys_ligase"/>
    <property type="match status" value="1"/>
</dbReference>
<dbReference type="InterPro" id="IPR014746">
    <property type="entry name" value="Gln_synth/guanido_kin_cat_dom"/>
</dbReference>
<dbReference type="InterPro" id="IPR007370">
    <property type="entry name" value="Glu_cys_ligase"/>
</dbReference>
<dbReference type="InterPro" id="IPR006334">
    <property type="entry name" value="Glut_cys_ligase"/>
</dbReference>
<dbReference type="NCBIfam" id="TIGR01434">
    <property type="entry name" value="glu_cys_ligase"/>
    <property type="match status" value="1"/>
</dbReference>
<dbReference type="PANTHER" id="PTHR38761">
    <property type="entry name" value="GLUTAMATE--CYSTEINE LIGASE"/>
    <property type="match status" value="1"/>
</dbReference>
<dbReference type="PANTHER" id="PTHR38761:SF1">
    <property type="entry name" value="GLUTAMATE--CYSTEINE LIGASE"/>
    <property type="match status" value="1"/>
</dbReference>
<dbReference type="Pfam" id="PF04262">
    <property type="entry name" value="Glu_cys_ligase"/>
    <property type="match status" value="1"/>
</dbReference>
<dbReference type="SUPFAM" id="SSF55931">
    <property type="entry name" value="Glutamine synthetase/guanido kinase"/>
    <property type="match status" value="1"/>
</dbReference>
<keyword id="KW-0067">ATP-binding</keyword>
<keyword id="KW-0317">Glutathione biosynthesis</keyword>
<keyword id="KW-0436">Ligase</keyword>
<keyword id="KW-0547">Nucleotide-binding</keyword>
<keyword id="KW-1185">Reference proteome</keyword>
<proteinExistence type="inferred from homology"/>
<evidence type="ECO:0000255" key="1">
    <source>
        <dbReference type="HAMAP-Rule" id="MF_00578"/>
    </source>
</evidence>
<sequence length="518" mass="58269">MIPDVSQALAWLEKHPQALKGIQRGLERETLRVNADGTLATTGHPEALGSALTHKWITTDFAEALLEFITPVDGDIEHMLTFMRDLHRYTARNMGDERMWPLSMPCYIAEGQDIELAQYGTSNTGRFKTLYREGLKNRYGALMQTISGVHYNFSLPMAFWQAKCGDISGADAKEKISAGYFRVIRNYYRFGWVIPYLFGASPAICSSFLQGKPTSLPFEKTECGMYYLPYATSLRLSDLGYTNKSQSNLGITFNDLYEYVAGLKQAIKTPSEEYAKIGIEKDGKRLQINSNVLQIENELYAPIRPKRVTRSGESPSDALLRGGIEYIEVRSLDINPFSPIGVDEQQVRFLDLFMVWCALADAPEMSSSELACTRVNWNRVILEGRKPGLTLGIGCETAQFPLPQVGKDLFRDLKRVAQTLDSINGGEAYQKVCDELVACFDNPDLTFSARILRSMIDTGIGGTGKAFAEAYRNLLREEPLEILREEDFVAEREASERRQQEMEAADTEPFAVWLEKHA</sequence>